<feature type="initiator methionine" description="Removed" evidence="2">
    <location>
        <position position="1"/>
    </location>
</feature>
<feature type="chain" id="PRO_0000319939" description="HAUS augmin-like complex subunit 8">
    <location>
        <begin position="2"/>
        <end position="385"/>
    </location>
</feature>
<feature type="region of interest" description="Disordered" evidence="4">
    <location>
        <begin position="1"/>
        <end position="78"/>
    </location>
</feature>
<feature type="region of interest" description="Disordered" evidence="4">
    <location>
        <begin position="107"/>
        <end position="128"/>
    </location>
</feature>
<feature type="region of interest" description="Disordered" evidence="4">
    <location>
        <begin position="356"/>
        <end position="385"/>
    </location>
</feature>
<feature type="coiled-coil region" evidence="3">
    <location>
        <begin position="131"/>
        <end position="248"/>
    </location>
</feature>
<feature type="compositionally biased region" description="Basic and acidic residues" evidence="4">
    <location>
        <begin position="1"/>
        <end position="10"/>
    </location>
</feature>
<feature type="compositionally biased region" description="Basic and acidic residues" evidence="4">
    <location>
        <begin position="53"/>
        <end position="75"/>
    </location>
</feature>
<feature type="compositionally biased region" description="Polar residues" evidence="4">
    <location>
        <begin position="375"/>
        <end position="385"/>
    </location>
</feature>
<feature type="modified residue" description="N-acetylalanine" evidence="2">
    <location>
        <position position="2"/>
    </location>
</feature>
<feature type="modified residue" description="Phosphoserine" evidence="2">
    <location>
        <position position="100"/>
    </location>
</feature>
<accession>Q5BK57</accession>
<proteinExistence type="evidence at transcript level"/>
<comment type="function">
    <text evidence="1">Contributes to mitotic spindle assembly, maintenance of centrosome integrity and completion of cytokinesis as part of the HAUS augmin-like complex.</text>
</comment>
<comment type="subunit">
    <text evidence="2">Component of the HAUS augmin-like complex. The complex interacts with the gamma-tubulin ring complex and this interaction is required for spindle assembly. Associates with microtubules. The interaction with microtubules is strong during mitosis, while it is weak or absent during interphase. It is unclear whether this interaction is direct or indirect (By similarity). Interacts with EML3 (phosphorylated form) and TUBG1 (By similarity).</text>
</comment>
<comment type="subcellular location">
    <subcellularLocation>
        <location evidence="2">Cytoplasm</location>
    </subcellularLocation>
    <subcellularLocation>
        <location evidence="2">Cytoplasm</location>
        <location evidence="2">Cytoskeleton</location>
        <location evidence="2">Microtubule organizing center</location>
        <location evidence="2">Centrosome</location>
    </subcellularLocation>
    <subcellularLocation>
        <location evidence="2">Cytoplasm</location>
        <location evidence="2">Cytoskeleton</location>
        <location evidence="2">Spindle</location>
    </subcellularLocation>
    <subcellularLocation>
        <location evidence="2">Cytoplasm</location>
        <location evidence="2">Cytoskeleton</location>
        <location evidence="2">Spindle pole</location>
    </subcellularLocation>
    <text evidence="2">During interphase, primarily cytoplasmic and associates with centrosomes and with the mitotic spindles, preferentially at the spindle pole vicinity. During anaphase and telophase, additionally associates with the spindle midzone and midbody, respectively. Localizes to mitotic spindle microtubules (By similarity).</text>
</comment>
<comment type="similarity">
    <text evidence="5">Belongs to the HAUS8 family.</text>
</comment>
<comment type="sequence caution" evidence="5">
    <conflict type="frameshift">
        <sequence resource="EMBL-CDS" id="AAH91198"/>
    </conflict>
</comment>
<protein>
    <recommendedName>
        <fullName>HAUS augmin-like complex subunit 8</fullName>
    </recommendedName>
    <alternativeName>
        <fullName>HEC1/NDC80-interacting centrosome-associated protein 1</fullName>
    </alternativeName>
    <alternativeName>
        <fullName>Sarcoma antigen NY-SAR-48 homolog</fullName>
    </alternativeName>
</protein>
<keyword id="KW-0007">Acetylation</keyword>
<keyword id="KW-0131">Cell cycle</keyword>
<keyword id="KW-0132">Cell division</keyword>
<keyword id="KW-0175">Coiled coil</keyword>
<keyword id="KW-0963">Cytoplasm</keyword>
<keyword id="KW-0206">Cytoskeleton</keyword>
<keyword id="KW-0493">Microtubule</keyword>
<keyword id="KW-0498">Mitosis</keyword>
<keyword id="KW-0597">Phosphoprotein</keyword>
<keyword id="KW-1185">Reference proteome</keyword>
<name>HAUS8_RAT</name>
<sequence length="385" mass="42332">MAGASERDAGKPAASGAGAVPKTKGRKVQGGRVVESRYLQYDKKTKKVSVAAKGEKPPTEGRKASTVPRSREESKVMGTSNLQSTMLEGHGLNPPDLDLSAIDDKSMSRKAPQLERSVAGTDKSTSLLRPDQKRTLRKKRRDLQETMDMMESQTLLMTLLSVKVENNLALLEEKAEKDLAAMCHEKERLQRQALELRRQLLLRQKHQELAAALDAQTEVLSPLPPVLERFKEEYKTLGRALDTTRHELSMQAVHMEGSGQELLDDLEPALRTTLQLLGDLSICSPEDSAQVQGASTQQPGASAQLNCLLKELKGLVAEKDLELCRLVSQVVELSSQASKEAALTNQEVWEEAQGTLTSSQGYFSPDVRKDHSPTQDRTNSSSLDP</sequence>
<evidence type="ECO:0000250" key="1"/>
<evidence type="ECO:0000250" key="2">
    <source>
        <dbReference type="UniProtKB" id="Q9BT25"/>
    </source>
</evidence>
<evidence type="ECO:0000255" key="3"/>
<evidence type="ECO:0000256" key="4">
    <source>
        <dbReference type="SAM" id="MobiDB-lite"/>
    </source>
</evidence>
<evidence type="ECO:0000305" key="5"/>
<dbReference type="EMBL" id="BC091198">
    <property type="protein sequence ID" value="AAH91198.1"/>
    <property type="status" value="ALT_FRAME"/>
    <property type="molecule type" value="mRNA"/>
</dbReference>
<dbReference type="RefSeq" id="NP_001020142.2">
    <property type="nucleotide sequence ID" value="NM_001024971.2"/>
</dbReference>
<dbReference type="SMR" id="Q5BK57"/>
<dbReference type="FunCoup" id="Q5BK57">
    <property type="interactions" value="1038"/>
</dbReference>
<dbReference type="IntAct" id="Q5BK57">
    <property type="interactions" value="6"/>
</dbReference>
<dbReference type="STRING" id="10116.ENSRNOP00000071943"/>
<dbReference type="PhosphoSitePlus" id="Q5BK57"/>
<dbReference type="PaxDb" id="10116-ENSRNOP00000038415"/>
<dbReference type="GeneID" id="290626"/>
<dbReference type="KEGG" id="rno:290626"/>
<dbReference type="UCSC" id="RGD:1311565">
    <property type="organism name" value="rat"/>
</dbReference>
<dbReference type="AGR" id="RGD:1311565"/>
<dbReference type="CTD" id="93323"/>
<dbReference type="RGD" id="1311565">
    <property type="gene designation" value="Haus8"/>
</dbReference>
<dbReference type="VEuPathDB" id="HostDB:ENSRNOG00000052038"/>
<dbReference type="eggNOG" id="ENOG502S04A">
    <property type="taxonomic scope" value="Eukaryota"/>
</dbReference>
<dbReference type="HOGENOM" id="CLU_060977_0_0_1"/>
<dbReference type="InParanoid" id="Q5BK57"/>
<dbReference type="PhylomeDB" id="Q5BK57"/>
<dbReference type="TreeFam" id="TF332998"/>
<dbReference type="Reactome" id="R-RNO-2565942">
    <property type="pathway name" value="Regulation of PLK1 Activity at G2/M Transition"/>
</dbReference>
<dbReference type="Reactome" id="R-RNO-380259">
    <property type="pathway name" value="Loss of Nlp from mitotic centrosomes"/>
</dbReference>
<dbReference type="Reactome" id="R-RNO-380270">
    <property type="pathway name" value="Recruitment of mitotic centrosome proteins and complexes"/>
</dbReference>
<dbReference type="Reactome" id="R-RNO-380284">
    <property type="pathway name" value="Loss of proteins required for interphase microtubule organization from the centrosome"/>
</dbReference>
<dbReference type="Reactome" id="R-RNO-380320">
    <property type="pathway name" value="Recruitment of NuMA to mitotic centrosomes"/>
</dbReference>
<dbReference type="Reactome" id="R-RNO-5620912">
    <property type="pathway name" value="Anchoring of the basal body to the plasma membrane"/>
</dbReference>
<dbReference type="Reactome" id="R-RNO-8854518">
    <property type="pathway name" value="AURKA Activation by TPX2"/>
</dbReference>
<dbReference type="PRO" id="PR:Q5BK57"/>
<dbReference type="Proteomes" id="UP000002494">
    <property type="component" value="Chromosome 16"/>
</dbReference>
<dbReference type="Bgee" id="ENSRNOG00000052038">
    <property type="expression patterns" value="Expressed in thymus and 19 other cell types or tissues"/>
</dbReference>
<dbReference type="ExpressionAtlas" id="Q5BK57">
    <property type="expression patterns" value="baseline and differential"/>
</dbReference>
<dbReference type="GO" id="GO:0005813">
    <property type="term" value="C:centrosome"/>
    <property type="evidence" value="ECO:0000266"/>
    <property type="project" value="RGD"/>
</dbReference>
<dbReference type="GO" id="GO:0005737">
    <property type="term" value="C:cytoplasm"/>
    <property type="evidence" value="ECO:0000318"/>
    <property type="project" value="GO_Central"/>
</dbReference>
<dbReference type="GO" id="GO:0070652">
    <property type="term" value="C:HAUS complex"/>
    <property type="evidence" value="ECO:0000250"/>
    <property type="project" value="UniProtKB"/>
</dbReference>
<dbReference type="GO" id="GO:1990498">
    <property type="term" value="C:mitotic spindle microtubule"/>
    <property type="evidence" value="ECO:0000250"/>
    <property type="project" value="UniProtKB"/>
</dbReference>
<dbReference type="GO" id="GO:0005880">
    <property type="term" value="C:nuclear microtubule"/>
    <property type="evidence" value="ECO:0000318"/>
    <property type="project" value="GO_Central"/>
</dbReference>
<dbReference type="GO" id="GO:0000922">
    <property type="term" value="C:spindle pole"/>
    <property type="evidence" value="ECO:0007669"/>
    <property type="project" value="UniProtKB-SubCell"/>
</dbReference>
<dbReference type="GO" id="GO:0008017">
    <property type="term" value="F:microtubule binding"/>
    <property type="evidence" value="ECO:0000318"/>
    <property type="project" value="GO_Central"/>
</dbReference>
<dbReference type="GO" id="GO:0051301">
    <property type="term" value="P:cell division"/>
    <property type="evidence" value="ECO:0007669"/>
    <property type="project" value="UniProtKB-KW"/>
</dbReference>
<dbReference type="GO" id="GO:0007098">
    <property type="term" value="P:centrosome cycle"/>
    <property type="evidence" value="ECO:0000250"/>
    <property type="project" value="UniProtKB"/>
</dbReference>
<dbReference type="GO" id="GO:0051225">
    <property type="term" value="P:spindle assembly"/>
    <property type="evidence" value="ECO:0000250"/>
    <property type="project" value="UniProtKB"/>
</dbReference>
<gene>
    <name type="primary">Haus8</name>
    <name type="synonym">Hice1</name>
    <name type="synonym">Ny-sar-48</name>
</gene>
<organism>
    <name type="scientific">Rattus norvegicus</name>
    <name type="common">Rat</name>
    <dbReference type="NCBI Taxonomy" id="10116"/>
    <lineage>
        <taxon>Eukaryota</taxon>
        <taxon>Metazoa</taxon>
        <taxon>Chordata</taxon>
        <taxon>Craniata</taxon>
        <taxon>Vertebrata</taxon>
        <taxon>Euteleostomi</taxon>
        <taxon>Mammalia</taxon>
        <taxon>Eutheria</taxon>
        <taxon>Euarchontoglires</taxon>
        <taxon>Glires</taxon>
        <taxon>Rodentia</taxon>
        <taxon>Myomorpha</taxon>
        <taxon>Muroidea</taxon>
        <taxon>Muridae</taxon>
        <taxon>Murinae</taxon>
        <taxon>Rattus</taxon>
    </lineage>
</organism>
<reference key="1">
    <citation type="journal article" date="2004" name="Genome Res.">
        <title>The status, quality, and expansion of the NIH full-length cDNA project: the Mammalian Gene Collection (MGC).</title>
        <authorList>
            <consortium name="The MGC Project Team"/>
        </authorList>
    </citation>
    <scope>NUCLEOTIDE SEQUENCE [LARGE SCALE MRNA]</scope>
    <source>
        <tissue>Spleen</tissue>
    </source>
</reference>